<comment type="function">
    <text evidence="1">Catalyzes the attachment of proline to tRNA(Pro) in a two-step reaction: proline is first activated by ATP to form Pro-AMP and then transferred to the acceptor end of tRNA(Pro).</text>
</comment>
<comment type="catalytic activity">
    <reaction evidence="1">
        <text>tRNA(Pro) + L-proline + ATP = L-prolyl-tRNA(Pro) + AMP + diphosphate</text>
        <dbReference type="Rhea" id="RHEA:14305"/>
        <dbReference type="Rhea" id="RHEA-COMP:9700"/>
        <dbReference type="Rhea" id="RHEA-COMP:9702"/>
        <dbReference type="ChEBI" id="CHEBI:30616"/>
        <dbReference type="ChEBI" id="CHEBI:33019"/>
        <dbReference type="ChEBI" id="CHEBI:60039"/>
        <dbReference type="ChEBI" id="CHEBI:78442"/>
        <dbReference type="ChEBI" id="CHEBI:78532"/>
        <dbReference type="ChEBI" id="CHEBI:456215"/>
        <dbReference type="EC" id="6.1.1.15"/>
    </reaction>
</comment>
<comment type="subunit">
    <text evidence="1">Homodimer.</text>
</comment>
<comment type="subcellular location">
    <subcellularLocation>
        <location evidence="1">Cytoplasm</location>
    </subcellularLocation>
</comment>
<comment type="similarity">
    <text evidence="1">Belongs to the class-II aminoacyl-tRNA synthetase family. ProS type 2 subfamily.</text>
</comment>
<accession>Q92I92</accession>
<organism>
    <name type="scientific">Rickettsia conorii (strain ATCC VR-613 / Malish 7)</name>
    <dbReference type="NCBI Taxonomy" id="272944"/>
    <lineage>
        <taxon>Bacteria</taxon>
        <taxon>Pseudomonadati</taxon>
        <taxon>Pseudomonadota</taxon>
        <taxon>Alphaproteobacteria</taxon>
        <taxon>Rickettsiales</taxon>
        <taxon>Rickettsiaceae</taxon>
        <taxon>Rickettsieae</taxon>
        <taxon>Rickettsia</taxon>
        <taxon>spotted fever group</taxon>
    </lineage>
</organism>
<name>SYP_RICCN</name>
<dbReference type="EC" id="6.1.1.15" evidence="1"/>
<dbReference type="EMBL" id="AE006914">
    <property type="protein sequence ID" value="AAL03066.1"/>
    <property type="molecule type" value="Genomic_DNA"/>
</dbReference>
<dbReference type="PIR" id="H97765">
    <property type="entry name" value="H97765"/>
</dbReference>
<dbReference type="RefSeq" id="WP_010977166.1">
    <property type="nucleotide sequence ID" value="NC_003103.1"/>
</dbReference>
<dbReference type="SMR" id="Q92I92"/>
<dbReference type="GeneID" id="927646"/>
<dbReference type="KEGG" id="rco:RC0528"/>
<dbReference type="PATRIC" id="fig|272944.4.peg.604"/>
<dbReference type="HOGENOM" id="CLU_016739_4_2_5"/>
<dbReference type="Proteomes" id="UP000000816">
    <property type="component" value="Chromosome"/>
</dbReference>
<dbReference type="GO" id="GO:0005829">
    <property type="term" value="C:cytosol"/>
    <property type="evidence" value="ECO:0007669"/>
    <property type="project" value="TreeGrafter"/>
</dbReference>
<dbReference type="GO" id="GO:0005524">
    <property type="term" value="F:ATP binding"/>
    <property type="evidence" value="ECO:0007669"/>
    <property type="project" value="UniProtKB-UniRule"/>
</dbReference>
<dbReference type="GO" id="GO:0004827">
    <property type="term" value="F:proline-tRNA ligase activity"/>
    <property type="evidence" value="ECO:0007669"/>
    <property type="project" value="UniProtKB-UniRule"/>
</dbReference>
<dbReference type="GO" id="GO:0006433">
    <property type="term" value="P:prolyl-tRNA aminoacylation"/>
    <property type="evidence" value="ECO:0007669"/>
    <property type="project" value="UniProtKB-UniRule"/>
</dbReference>
<dbReference type="CDD" id="cd00861">
    <property type="entry name" value="ProRS_anticodon_short"/>
    <property type="match status" value="1"/>
</dbReference>
<dbReference type="CDD" id="cd00779">
    <property type="entry name" value="ProRS_core_prok"/>
    <property type="match status" value="1"/>
</dbReference>
<dbReference type="FunFam" id="3.30.930.10:FF:000042">
    <property type="entry name" value="probable proline--tRNA ligase, mitochondrial"/>
    <property type="match status" value="1"/>
</dbReference>
<dbReference type="FunFam" id="3.40.50.800:FF:000032">
    <property type="entry name" value="Proline--tRNA ligase"/>
    <property type="match status" value="1"/>
</dbReference>
<dbReference type="Gene3D" id="3.40.50.800">
    <property type="entry name" value="Anticodon-binding domain"/>
    <property type="match status" value="1"/>
</dbReference>
<dbReference type="Gene3D" id="3.30.930.10">
    <property type="entry name" value="Bira Bifunctional Protein, Domain 2"/>
    <property type="match status" value="1"/>
</dbReference>
<dbReference type="HAMAP" id="MF_01570">
    <property type="entry name" value="Pro_tRNA_synth_type2"/>
    <property type="match status" value="1"/>
</dbReference>
<dbReference type="InterPro" id="IPR002314">
    <property type="entry name" value="aa-tRNA-synt_IIb"/>
</dbReference>
<dbReference type="InterPro" id="IPR006195">
    <property type="entry name" value="aa-tRNA-synth_II"/>
</dbReference>
<dbReference type="InterPro" id="IPR045864">
    <property type="entry name" value="aa-tRNA-synth_II/BPL/LPL"/>
</dbReference>
<dbReference type="InterPro" id="IPR004154">
    <property type="entry name" value="Anticodon-bd"/>
</dbReference>
<dbReference type="InterPro" id="IPR036621">
    <property type="entry name" value="Anticodon-bd_dom_sf"/>
</dbReference>
<dbReference type="InterPro" id="IPR002316">
    <property type="entry name" value="Pro-tRNA-ligase_IIa"/>
</dbReference>
<dbReference type="InterPro" id="IPR004500">
    <property type="entry name" value="Pro-tRNA-synth_IIa_bac-type"/>
</dbReference>
<dbReference type="InterPro" id="IPR050062">
    <property type="entry name" value="Pro-tRNA_synthetase"/>
</dbReference>
<dbReference type="InterPro" id="IPR023716">
    <property type="entry name" value="Prolyl-tRNA_ligase_IIa_type2"/>
</dbReference>
<dbReference type="InterPro" id="IPR044140">
    <property type="entry name" value="ProRS_anticodon_short"/>
</dbReference>
<dbReference type="InterPro" id="IPR033730">
    <property type="entry name" value="ProRS_core_prok"/>
</dbReference>
<dbReference type="NCBIfam" id="NF008979">
    <property type="entry name" value="PRK12325.1"/>
    <property type="match status" value="1"/>
</dbReference>
<dbReference type="NCBIfam" id="TIGR00409">
    <property type="entry name" value="proS_fam_II"/>
    <property type="match status" value="1"/>
</dbReference>
<dbReference type="PANTHER" id="PTHR42753">
    <property type="entry name" value="MITOCHONDRIAL RIBOSOME PROTEIN L39/PROLYL-TRNA LIGASE FAMILY MEMBER"/>
    <property type="match status" value="1"/>
</dbReference>
<dbReference type="PANTHER" id="PTHR42753:SF2">
    <property type="entry name" value="PROLINE--TRNA LIGASE"/>
    <property type="match status" value="1"/>
</dbReference>
<dbReference type="Pfam" id="PF03129">
    <property type="entry name" value="HGTP_anticodon"/>
    <property type="match status" value="1"/>
</dbReference>
<dbReference type="Pfam" id="PF00587">
    <property type="entry name" value="tRNA-synt_2b"/>
    <property type="match status" value="1"/>
</dbReference>
<dbReference type="PRINTS" id="PR01046">
    <property type="entry name" value="TRNASYNTHPRO"/>
</dbReference>
<dbReference type="SUPFAM" id="SSF52954">
    <property type="entry name" value="Class II aaRS ABD-related"/>
    <property type="match status" value="1"/>
</dbReference>
<dbReference type="SUPFAM" id="SSF55681">
    <property type="entry name" value="Class II aaRS and biotin synthetases"/>
    <property type="match status" value="1"/>
</dbReference>
<dbReference type="PROSITE" id="PS50862">
    <property type="entry name" value="AA_TRNA_LIGASE_II"/>
    <property type="match status" value="1"/>
</dbReference>
<keyword id="KW-0030">Aminoacyl-tRNA synthetase</keyword>
<keyword id="KW-0067">ATP-binding</keyword>
<keyword id="KW-0963">Cytoplasm</keyword>
<keyword id="KW-0436">Ligase</keyword>
<keyword id="KW-0547">Nucleotide-binding</keyword>
<keyword id="KW-0648">Protein biosynthesis</keyword>
<reference key="1">
    <citation type="journal article" date="2001" name="Science">
        <title>Mechanisms of evolution in Rickettsia conorii and R. prowazekii.</title>
        <authorList>
            <person name="Ogata H."/>
            <person name="Audic S."/>
            <person name="Renesto-Audiffren P."/>
            <person name="Fournier P.-E."/>
            <person name="Barbe V."/>
            <person name="Samson D."/>
            <person name="Roux V."/>
            <person name="Cossart P."/>
            <person name="Weissenbach J."/>
            <person name="Claverie J.-M."/>
            <person name="Raoult D."/>
        </authorList>
    </citation>
    <scope>NUCLEOTIDE SEQUENCE [LARGE SCALE GENOMIC DNA]</scope>
    <source>
        <strain>ATCC VR-613 / Malish 7</strain>
    </source>
</reference>
<gene>
    <name evidence="1" type="primary">proS</name>
    <name type="ordered locus">RC0528</name>
</gene>
<protein>
    <recommendedName>
        <fullName evidence="1">Proline--tRNA ligase</fullName>
        <ecNumber evidence="1">6.1.1.15</ecNumber>
    </recommendedName>
    <alternativeName>
        <fullName evidence="1">Prolyl-tRNA synthetase</fullName>
        <shortName evidence="1">ProRS</shortName>
    </alternativeName>
</protein>
<feature type="chain" id="PRO_0000248915" description="Proline--tRNA ligase">
    <location>
        <begin position="1"/>
        <end position="426"/>
    </location>
</feature>
<proteinExistence type="inferred from homology"/>
<sequence length="426" mass="48472">MLLSKYFLPVLKEEPSEAQVTSHKLMLRSGMIRQQAAGIYTWLPLGLKVLKNIENIVRLNMNKAGALEVLMPCIQPAHLWMESGRFDNYGKEMLKFQDRHDNTLLFGPTNEDMITDIFRHNIKSYKDLPKNLYHIQWKFRDEIRPRFGVMRGREFLMKDAYSFDINEENAVKTYNQMYKAYINAFRDLGVFVIPVIADNGPIGGNLSHEFHIIAETGESTIYYDKKFKTLKDNPDIDVEEIKSWYAAAEEKYEVNKLPISEQEITSSKGIEVGHIFYIGSKYSVNMNALINDEYGKLTPIEMSSYGIGISRLVAAIIEANCDEKGIIWPSSVAPFKVSLINLNIHDSKCVELAEMAYKELSDKNIEVLYDDTEARPGSKFATHDLIGSPHQIIIGPKKAANNIVELKDRKSGVIEDIEVGSLMSVL</sequence>
<evidence type="ECO:0000255" key="1">
    <source>
        <dbReference type="HAMAP-Rule" id="MF_01570"/>
    </source>
</evidence>